<proteinExistence type="evidence at protein level"/>
<dbReference type="EMBL" id="U79458">
    <property type="protein sequence ID" value="AAD10951.1"/>
    <property type="status" value="ALT_INIT"/>
    <property type="molecule type" value="mRNA"/>
</dbReference>
<dbReference type="EMBL" id="AK294082">
    <property type="protein sequence ID" value="BAG57423.1"/>
    <property type="molecule type" value="mRNA"/>
</dbReference>
<dbReference type="EMBL" id="AC087289">
    <property type="status" value="NOT_ANNOTATED_CDS"/>
    <property type="molecule type" value="Genomic_DNA"/>
</dbReference>
<dbReference type="EMBL" id="BC007452">
    <property type="protein sequence ID" value="AAH07452.1"/>
    <property type="molecule type" value="mRNA"/>
</dbReference>
<dbReference type="EMBL" id="BC010616">
    <property type="protein sequence ID" value="AAH10616.1"/>
    <property type="molecule type" value="mRNA"/>
</dbReference>
<dbReference type="CCDS" id="CCDS11731.1">
    <molecule id="Q969T9-1"/>
</dbReference>
<dbReference type="CCDS" id="CCDS82206.1">
    <molecule id="Q969T9-2"/>
</dbReference>
<dbReference type="RefSeq" id="NP_001317428.1">
    <molecule id="Q969T9-2"/>
    <property type="nucleotide sequence ID" value="NM_001330499.2"/>
</dbReference>
<dbReference type="RefSeq" id="NP_001335099.1">
    <molecule id="Q969T9-1"/>
    <property type="nucleotide sequence ID" value="NM_001348170.1"/>
</dbReference>
<dbReference type="RefSeq" id="NP_036610.2">
    <molecule id="Q969T9-1"/>
    <property type="nucleotide sequence ID" value="NM_012478.3"/>
</dbReference>
<dbReference type="SMR" id="Q969T9"/>
<dbReference type="BioGRID" id="117102">
    <property type="interactions" value="84"/>
</dbReference>
<dbReference type="DIP" id="DIP-42509N"/>
<dbReference type="FunCoup" id="Q969T9">
    <property type="interactions" value="2951"/>
</dbReference>
<dbReference type="IntAct" id="Q969T9">
    <property type="interactions" value="29"/>
</dbReference>
<dbReference type="MINT" id="Q969T9"/>
<dbReference type="STRING" id="9606.ENSP00000467579"/>
<dbReference type="GlyGen" id="Q969T9">
    <property type="glycosylation" value="1 site, 1 O-linked glycan (1 site)"/>
</dbReference>
<dbReference type="iPTMnet" id="Q969T9"/>
<dbReference type="MetOSite" id="Q969T9"/>
<dbReference type="PhosphoSitePlus" id="Q969T9"/>
<dbReference type="BioMuta" id="WBP2"/>
<dbReference type="DMDM" id="25091539"/>
<dbReference type="OGP" id="Q969T9"/>
<dbReference type="jPOST" id="Q969T9"/>
<dbReference type="MassIVE" id="Q969T9"/>
<dbReference type="PaxDb" id="9606-ENSP00000467579"/>
<dbReference type="PeptideAtlas" id="Q969T9"/>
<dbReference type="ProteomicsDB" id="4034"/>
<dbReference type="ProteomicsDB" id="75845"/>
<dbReference type="Pumba" id="Q969T9"/>
<dbReference type="Antibodypedia" id="32285">
    <property type="antibodies" value="140 antibodies from 26 providers"/>
</dbReference>
<dbReference type="DNASU" id="23558"/>
<dbReference type="Ensembl" id="ENST00000254806.8">
    <molecule id="Q969T9-1"/>
    <property type="protein sequence ID" value="ENSP00000254806.3"/>
    <property type="gene ID" value="ENSG00000132471.12"/>
</dbReference>
<dbReference type="Ensembl" id="ENST00000433525.6">
    <molecule id="Q969T9-2"/>
    <property type="protein sequence ID" value="ENSP00000415251.2"/>
    <property type="gene ID" value="ENSG00000132471.12"/>
</dbReference>
<dbReference type="Ensembl" id="ENST00000591399.5">
    <molecule id="Q969T9-1"/>
    <property type="protein sequence ID" value="ENSP00000467579.1"/>
    <property type="gene ID" value="ENSG00000132471.12"/>
</dbReference>
<dbReference type="GeneID" id="23558"/>
<dbReference type="KEGG" id="hsa:23558"/>
<dbReference type="MANE-Select" id="ENST00000254806.8">
    <property type="protein sequence ID" value="ENSP00000254806.3"/>
    <property type="RefSeq nucleotide sequence ID" value="NM_012478.4"/>
    <property type="RefSeq protein sequence ID" value="NP_036610.2"/>
</dbReference>
<dbReference type="UCSC" id="uc002jps.3">
    <molecule id="Q969T9-1"/>
    <property type="organism name" value="human"/>
</dbReference>
<dbReference type="UCSC" id="uc010wsm.3">
    <property type="organism name" value="human"/>
</dbReference>
<dbReference type="AGR" id="HGNC:12738"/>
<dbReference type="CTD" id="23558"/>
<dbReference type="DisGeNET" id="23558"/>
<dbReference type="GeneCards" id="WBP2"/>
<dbReference type="HGNC" id="HGNC:12738">
    <property type="gene designation" value="WBP2"/>
</dbReference>
<dbReference type="HPA" id="ENSG00000132471">
    <property type="expression patterns" value="Low tissue specificity"/>
</dbReference>
<dbReference type="MalaCards" id="WBP2"/>
<dbReference type="MIM" id="606962">
    <property type="type" value="gene"/>
</dbReference>
<dbReference type="MIM" id="617639">
    <property type="type" value="phenotype"/>
</dbReference>
<dbReference type="neXtProt" id="NX_Q969T9"/>
<dbReference type="OpenTargets" id="ENSG00000132471"/>
<dbReference type="Orphanet" id="90636">
    <property type="disease" value="Rare autosomal recessive non-syndromic sensorineural deafness type DFNB"/>
</dbReference>
<dbReference type="PharmGKB" id="PA37349"/>
<dbReference type="VEuPathDB" id="HostDB:ENSG00000132471"/>
<dbReference type="eggNOG" id="KOG3294">
    <property type="taxonomic scope" value="Eukaryota"/>
</dbReference>
<dbReference type="GeneTree" id="ENSGT00530000063718"/>
<dbReference type="InParanoid" id="Q969T9"/>
<dbReference type="OMA" id="PYPGINA"/>
<dbReference type="OrthoDB" id="1259151at2759"/>
<dbReference type="PAN-GO" id="Q969T9">
    <property type="GO annotations" value="4 GO annotations based on evolutionary models"/>
</dbReference>
<dbReference type="PhylomeDB" id="Q969T9"/>
<dbReference type="TreeFam" id="TF314141"/>
<dbReference type="PathwayCommons" id="Q969T9"/>
<dbReference type="SignaLink" id="Q969T9"/>
<dbReference type="SIGNOR" id="Q969T9"/>
<dbReference type="BioGRID-ORCS" id="23558">
    <property type="hits" value="14 hits in 1149 CRISPR screens"/>
</dbReference>
<dbReference type="CD-CODE" id="DEE660B4">
    <property type="entry name" value="Stress granule"/>
</dbReference>
<dbReference type="ChiTaRS" id="WBP2">
    <property type="organism name" value="human"/>
</dbReference>
<dbReference type="GeneWiki" id="WBP2"/>
<dbReference type="GenomeRNAi" id="23558"/>
<dbReference type="Pharos" id="Q969T9">
    <property type="development level" value="Tbio"/>
</dbReference>
<dbReference type="PRO" id="PR:Q969T9"/>
<dbReference type="Proteomes" id="UP000005640">
    <property type="component" value="Chromosome 17"/>
</dbReference>
<dbReference type="RNAct" id="Q969T9">
    <property type="molecule type" value="protein"/>
</dbReference>
<dbReference type="Bgee" id="ENSG00000132471">
    <property type="expression patterns" value="Expressed in right frontal lobe and 207 other cell types or tissues"/>
</dbReference>
<dbReference type="ExpressionAtlas" id="Q969T9">
    <property type="expression patterns" value="baseline and differential"/>
</dbReference>
<dbReference type="GO" id="GO:0000785">
    <property type="term" value="C:chromatin"/>
    <property type="evidence" value="ECO:0000314"/>
    <property type="project" value="UniProtKB"/>
</dbReference>
<dbReference type="GO" id="GO:0005737">
    <property type="term" value="C:cytoplasm"/>
    <property type="evidence" value="ECO:0000314"/>
    <property type="project" value="UniProtKB"/>
</dbReference>
<dbReference type="GO" id="GO:0005829">
    <property type="term" value="C:cytosol"/>
    <property type="evidence" value="ECO:0000314"/>
    <property type="project" value="HPA"/>
</dbReference>
<dbReference type="GO" id="GO:0005654">
    <property type="term" value="C:nucleoplasm"/>
    <property type="evidence" value="ECO:0000314"/>
    <property type="project" value="HPA"/>
</dbReference>
<dbReference type="GO" id="GO:0005634">
    <property type="term" value="C:nucleus"/>
    <property type="evidence" value="ECO:0000314"/>
    <property type="project" value="UniProtKB"/>
</dbReference>
<dbReference type="GO" id="GO:0031490">
    <property type="term" value="F:chromatin DNA binding"/>
    <property type="evidence" value="ECO:0000315"/>
    <property type="project" value="UniProtKB"/>
</dbReference>
<dbReference type="GO" id="GO:0030331">
    <property type="term" value="F:nuclear estrogen receptor binding"/>
    <property type="evidence" value="ECO:0000353"/>
    <property type="project" value="UniProtKB"/>
</dbReference>
<dbReference type="GO" id="GO:0000978">
    <property type="term" value="F:RNA polymerase II cis-regulatory region sequence-specific DNA binding"/>
    <property type="evidence" value="ECO:0000315"/>
    <property type="project" value="UniProtKB"/>
</dbReference>
<dbReference type="GO" id="GO:0003713">
    <property type="term" value="F:transcription coactivator activity"/>
    <property type="evidence" value="ECO:0000314"/>
    <property type="project" value="UniProtKB"/>
</dbReference>
<dbReference type="GO" id="GO:0071391">
    <property type="term" value="P:cellular response to estrogen stimulus"/>
    <property type="evidence" value="ECO:0000315"/>
    <property type="project" value="UniProtKB"/>
</dbReference>
<dbReference type="GO" id="GO:0071169">
    <property type="term" value="P:establishment of protein localization to chromatin"/>
    <property type="evidence" value="ECO:0000315"/>
    <property type="project" value="UniProtKB"/>
</dbReference>
<dbReference type="GO" id="GO:0045893">
    <property type="term" value="P:positive regulation of DNA-templated transcription"/>
    <property type="evidence" value="ECO:0000318"/>
    <property type="project" value="GO_Central"/>
</dbReference>
<dbReference type="GO" id="GO:0033148">
    <property type="term" value="P:positive regulation of intracellular estrogen receptor signaling pathway"/>
    <property type="evidence" value="ECO:0000314"/>
    <property type="project" value="UniProtKB"/>
</dbReference>
<dbReference type="GO" id="GO:0045944">
    <property type="term" value="P:positive regulation of transcription by RNA polymerase II"/>
    <property type="evidence" value="ECO:0000315"/>
    <property type="project" value="UniProtKB"/>
</dbReference>
<dbReference type="GO" id="GO:0050847">
    <property type="term" value="P:progesterone receptor signaling pathway"/>
    <property type="evidence" value="ECO:0000314"/>
    <property type="project" value="UniProtKB"/>
</dbReference>
<dbReference type="GO" id="GO:0043627">
    <property type="term" value="P:response to estrogen"/>
    <property type="evidence" value="ECO:0000314"/>
    <property type="project" value="UniProtKB"/>
</dbReference>
<dbReference type="GO" id="GO:0032570">
    <property type="term" value="P:response to progesterone"/>
    <property type="evidence" value="ECO:0000314"/>
    <property type="project" value="UniProtKB"/>
</dbReference>
<dbReference type="GO" id="GO:0045815">
    <property type="term" value="P:transcription initiation-coupled chromatin remodeling"/>
    <property type="evidence" value="ECO:0000315"/>
    <property type="project" value="UniProtKB"/>
</dbReference>
<dbReference type="CDD" id="cd13214">
    <property type="entry name" value="PH-GRAM_WBP2"/>
    <property type="match status" value="1"/>
</dbReference>
<dbReference type="InterPro" id="IPR004182">
    <property type="entry name" value="GRAM"/>
</dbReference>
<dbReference type="InterPro" id="IPR044852">
    <property type="entry name" value="WBP2-like"/>
</dbReference>
<dbReference type="PANTHER" id="PTHR31606">
    <property type="entry name" value="WW DOMAIN BINDING PROTEIN 2, ISOFORM E"/>
    <property type="match status" value="1"/>
</dbReference>
<dbReference type="PANTHER" id="PTHR31606:SF4">
    <property type="entry name" value="WW DOMAIN-BINDING PROTEIN 2"/>
    <property type="match status" value="1"/>
</dbReference>
<dbReference type="Pfam" id="PF02893">
    <property type="entry name" value="GRAM"/>
    <property type="match status" value="1"/>
</dbReference>
<dbReference type="SUPFAM" id="SSF50729">
    <property type="entry name" value="PH domain-like"/>
    <property type="match status" value="1"/>
</dbReference>
<organism>
    <name type="scientific">Homo sapiens</name>
    <name type="common">Human</name>
    <dbReference type="NCBI Taxonomy" id="9606"/>
    <lineage>
        <taxon>Eukaryota</taxon>
        <taxon>Metazoa</taxon>
        <taxon>Chordata</taxon>
        <taxon>Craniata</taxon>
        <taxon>Vertebrata</taxon>
        <taxon>Euteleostomi</taxon>
        <taxon>Mammalia</taxon>
        <taxon>Eutheria</taxon>
        <taxon>Euarchontoglires</taxon>
        <taxon>Primates</taxon>
        <taxon>Haplorrhini</taxon>
        <taxon>Catarrhini</taxon>
        <taxon>Hominidae</taxon>
        <taxon>Homo</taxon>
    </lineage>
</organism>
<feature type="chain" id="PRO_0000065950" description="WW domain-binding protein 2">
    <location>
        <begin position="1"/>
        <end position="261"/>
    </location>
</feature>
<feature type="domain" description="GRAM">
    <location>
        <begin position="1"/>
        <end position="84"/>
    </location>
</feature>
<feature type="region of interest" description="Disordered" evidence="2">
    <location>
        <begin position="196"/>
        <end position="261"/>
    </location>
</feature>
<feature type="short sequence motif" description="PPxY motif 1">
    <location>
        <begin position="196"/>
        <end position="200"/>
    </location>
</feature>
<feature type="short sequence motif" description="PPxY motif 2">
    <location>
        <begin position="248"/>
        <end position="252"/>
    </location>
</feature>
<feature type="compositionally biased region" description="Pro residues" evidence="2">
    <location>
        <begin position="196"/>
        <end position="209"/>
    </location>
</feature>
<feature type="compositionally biased region" description="Low complexity" evidence="2">
    <location>
        <begin position="218"/>
        <end position="230"/>
    </location>
</feature>
<feature type="compositionally biased region" description="Pro residues" evidence="2">
    <location>
        <begin position="245"/>
        <end position="254"/>
    </location>
</feature>
<feature type="modified residue" description="Phosphotyrosine; by YES and SRC" evidence="4">
    <location>
        <position position="192"/>
    </location>
</feature>
<feature type="modified residue" description="Phosphotyrosine; by YES and SRC" evidence="4">
    <location>
        <position position="231"/>
    </location>
</feature>
<feature type="splice variant" id="VSP_059233" description="In isoform 2.">
    <location>
        <begin position="133"/>
        <end position="177"/>
    </location>
</feature>
<feature type="sequence variant" id="VAR_079500" description="In DFNB107; dbSNP:rs202022024." evidence="5">
    <original>A</original>
    <variation>T</variation>
    <location>
        <position position="160"/>
    </location>
</feature>
<feature type="sequence variant" id="VAR_079501" description="In DFNB107; uncertain significance; dbSNP:rs1555604710." evidence="5">
    <original>M</original>
    <variation>L</variation>
    <location>
        <position position="163"/>
    </location>
</feature>
<feature type="sequence variant" id="VAR_079502" description="In DFNB107; uncertain significance; dbSNP:rs1555604549." evidence="5">
    <original>A</original>
    <variation>V</variation>
    <location>
        <position position="224"/>
    </location>
</feature>
<feature type="mutagenesis site" description="No effect on phosphorylation induced by EGF." evidence="4">
    <original>Y</original>
    <variation>F</variation>
    <location>
        <position position="25"/>
    </location>
</feature>
<feature type="mutagenesis site" description="No effect on phosphorylation induced by EGF." evidence="4">
    <original>Y</original>
    <variation>F</variation>
    <location>
        <position position="51"/>
    </location>
</feature>
<feature type="mutagenesis site" description="No effect on phosphorylation induced by EGF." evidence="4">
    <original>Y</original>
    <variation>F</variation>
    <location>
        <position position="55"/>
    </location>
</feature>
<feature type="mutagenesis site" description="No effect on phosphorylation induced by EGF." evidence="4">
    <original>Y</original>
    <variation>F</variation>
    <location>
        <position position="75"/>
    </location>
</feature>
<feature type="mutagenesis site" description="No effect on phosphorylation induced by EGF." evidence="4">
    <original>Y</original>
    <variation>F</variation>
    <location>
        <position position="143"/>
    </location>
</feature>
<feature type="mutagenesis site" description="No effect on phosphorylation induced by EGF." evidence="4">
    <original>Y</original>
    <variation>F</variation>
    <location>
        <position position="145"/>
    </location>
</feature>
<feature type="mutagenesis site" description="No effect on phosphorylation induced by EGF." evidence="4">
    <original>Y</original>
    <variation>F</variation>
    <location>
        <position position="153"/>
    </location>
</feature>
<feature type="mutagenesis site" description="No effect on phosphorylation induced by EGF." evidence="4">
    <original>Y</original>
    <variation>F</variation>
    <location>
        <position position="164"/>
    </location>
</feature>
<feature type="mutagenesis site" description="No effect on phosphorylation induced by EGF." evidence="4">
    <original>Y</original>
    <variation>F</variation>
    <location>
        <position position="170"/>
    </location>
</feature>
<feature type="mutagenesis site" description="No effect on phosphorylation induced by EGF." evidence="4">
    <original>Y</original>
    <variation>F</variation>
    <location>
        <position position="172"/>
    </location>
</feature>
<feature type="mutagenesis site" description="No effect on phosphorylation induced by EGF." evidence="4">
    <original>Y</original>
    <variation>F</variation>
    <location>
        <position position="180"/>
    </location>
</feature>
<feature type="mutagenesis site" description="Strongly decreases phosphorylation induced by EGF. Abolishes phosphorylation in response to EGF, estrogen and progesterone; when associated with F-231." evidence="4">
    <original>Y</original>
    <variation>F</variation>
    <location>
        <position position="192"/>
    </location>
</feature>
<feature type="mutagenesis site" description="No effect on phosphorylation induced by EGF." evidence="4">
    <original>Y</original>
    <variation>F</variation>
    <location>
        <position position="200"/>
    </location>
</feature>
<feature type="mutagenesis site" description="Strongly decreases phosphorylation induced by EGF. Abolishes phosphorylation in response to EGF, estrogen and progesterone; when associated with F-231." evidence="4">
    <original>Y</original>
    <variation>F</variation>
    <location>
        <position position="231"/>
    </location>
</feature>
<feature type="mutagenesis site" description="No effect on phosphorylation induced by EGF." evidence="4">
    <original>Y</original>
    <variation>F</variation>
    <location>
        <position position="232"/>
    </location>
</feature>
<feature type="mutagenesis site" description="Loss of coactivator activity in presence of estrogen." evidence="3">
    <original>PPPPY</original>
    <variation>AAAPA</variation>
    <location>
        <begin position="248"/>
        <end position="252"/>
    </location>
</feature>
<feature type="mutagenesis site" description="No effect on phosphorylation induced by EGF." evidence="4">
    <original>Y</original>
    <variation>F</variation>
    <location>
        <position position="252"/>
    </location>
</feature>
<feature type="mutagenesis site" description="No effect on phosphorylation induced by EGF." evidence="4">
    <original>Y</original>
    <variation>F</variation>
    <location>
        <position position="253"/>
    </location>
</feature>
<evidence type="ECO:0000250" key="1">
    <source>
        <dbReference type="UniProtKB" id="P97765"/>
    </source>
</evidence>
<evidence type="ECO:0000256" key="2">
    <source>
        <dbReference type="SAM" id="MobiDB-lite"/>
    </source>
</evidence>
<evidence type="ECO:0000269" key="3">
    <source>
    </source>
</evidence>
<evidence type="ECO:0000269" key="4">
    <source>
    </source>
</evidence>
<evidence type="ECO:0000269" key="5">
    <source>
    </source>
</evidence>
<evidence type="ECO:0000269" key="6">
    <source>
    </source>
</evidence>
<evidence type="ECO:0000269" key="7">
    <source>
    </source>
</evidence>
<evidence type="ECO:0000305" key="8"/>
<evidence type="ECO:0000312" key="9">
    <source>
        <dbReference type="HGNC" id="HGNC:12738"/>
    </source>
</evidence>
<sequence length="261" mass="28087">MALNKNHSEGGGVIVNNTESILMSYDHVELTFNDMKNVPEAFKGTKKGTVYLTPYRVIFLSKGKDAMQSFMMPFYLMKDCEIKQPVFGANYIKGTVKAEAGGGWEGSASYKLTFTAGGAIEFGQRMLQVASQASRGEVPSGAYGYSYMPSGAYVYPPPVANGMYPCPPGYPYPPPPPEFYPGPPMMDGAMGYVQPPPPPYPGPMEPPVSGPDVPSTPAAEAKAAEAAASAYYNPGNPHNVYMPTSQPPPPPYYPPEDKKTQ</sequence>
<keyword id="KW-0025">Alternative splicing</keyword>
<keyword id="KW-0963">Cytoplasm</keyword>
<keyword id="KW-0209">Deafness</keyword>
<keyword id="KW-0225">Disease variant</keyword>
<keyword id="KW-1010">Non-syndromic deafness</keyword>
<keyword id="KW-0539">Nucleus</keyword>
<keyword id="KW-0597">Phosphoprotein</keyword>
<keyword id="KW-1267">Proteomics identification</keyword>
<keyword id="KW-1185">Reference proteome</keyword>
<keyword id="KW-0677">Repeat</keyword>
<name>WBP2_HUMAN</name>
<comment type="function">
    <text evidence="1 3">Acts as a transcriptional coactivator of estrogen and progesterone receptors (ESR1 and PGR) upon hormone activation (PubMed:16772533). In presence of estrogen, binds to ESR1-responsive promoters (PubMed:16772533). Synergizes with YAP1 to enhance PGR activity (PubMed:16772533). Modulates expression of post-synaptic scaffolding proteins via regulation of ESR1, ESR2 and PGR (By similarity).</text>
</comment>
<comment type="subunit">
    <text evidence="1 3 4 6 7">Binds to the WW domain of YAP1, WWP1 and WWP2 (PubMed:9169421, PubMed:9202023). Interacts with NEDD4 (By similarity). Interacts with ESR1 and UBE3A (PubMed:16772533, PubMed:21642474).</text>
</comment>
<comment type="interaction">
    <interactant intactId="EBI-727055">
        <id>Q969T9</id>
    </interactant>
    <interactant intactId="EBI-747185">
        <id>O95817</id>
        <label>BAG3</label>
    </interactant>
    <organismsDiffer>false</organismsDiffer>
    <experiments>4</experiments>
</comment>
<comment type="interaction">
    <interactant intactId="EBI-727055">
        <id>Q969T9</id>
    </interactant>
    <interactant intactId="EBI-357046">
        <id>Q99832</id>
        <label>CCT7</label>
    </interactant>
    <organismsDiffer>false</organismsDiffer>
    <experiments>3</experiments>
</comment>
<comment type="interaction">
    <interactant intactId="EBI-727055">
        <id>Q969T9</id>
    </interactant>
    <interactant intactId="EBI-12135243">
        <id>O95208-2</id>
        <label>EPN2</label>
    </interactant>
    <organismsDiffer>false</organismsDiffer>
    <experiments>3</experiments>
</comment>
<comment type="interaction">
    <interactant intactId="EBI-727055">
        <id>Q969T9</id>
    </interactant>
    <interactant intactId="EBI-748420">
        <id>Q9NSC5</id>
        <label>HOMER3</label>
    </interactant>
    <organismsDiffer>false</organismsDiffer>
    <experiments>3</experiments>
</comment>
<comment type="interaction">
    <interactant intactId="EBI-727055">
        <id>Q969T9</id>
    </interactant>
    <interactant intactId="EBI-12069522">
        <id>O00214-2</id>
        <label>LGALS8</label>
    </interactant>
    <organismsDiffer>false</organismsDiffer>
    <experiments>3</experiments>
</comment>
<comment type="interaction">
    <interactant intactId="EBI-727055">
        <id>Q969T9</id>
    </interactant>
    <interactant intactId="EBI-10194128">
        <id>Q1RN33</id>
        <label>MAGEA4</label>
    </interactant>
    <organismsDiffer>false</organismsDiffer>
    <experiments>3</experiments>
</comment>
<comment type="interaction">
    <interactant intactId="EBI-727055">
        <id>Q969T9</id>
    </interactant>
    <interactant intactId="EBI-6391136">
        <id>Q99717</id>
        <label>SMAD5</label>
    </interactant>
    <organismsDiffer>false</organismsDiffer>
    <experiments>3</experiments>
</comment>
<comment type="interaction">
    <interactant intactId="EBI-727055">
        <id>Q969T9</id>
    </interactant>
    <interactant intactId="EBI-348496">
        <id>Q969T4</id>
        <label>UBE2E3</label>
    </interactant>
    <organismsDiffer>false</organismsDiffer>
    <experiments>3</experiments>
</comment>
<comment type="interaction">
    <interactant intactId="EBI-727055">
        <id>Q969T9</id>
    </interactant>
    <interactant intactId="EBI-747743">
        <id>Q9GZV5</id>
        <label>WWTR1</label>
    </interactant>
    <organismsDiffer>false</organismsDiffer>
    <experiments>6</experiments>
</comment>
<comment type="interaction">
    <interactant intactId="EBI-727055">
        <id>Q969T9</id>
    </interactant>
    <interactant intactId="EBI-1044059">
        <id>P46937</id>
        <label>YAP1</label>
    </interactant>
    <organismsDiffer>false</organismsDiffer>
    <experiments>7</experiments>
</comment>
<comment type="subcellular location">
    <subcellularLocation>
        <location evidence="4">Cytoplasm</location>
    </subcellularLocation>
    <subcellularLocation>
        <location evidence="4">Nucleus</location>
    </subcellularLocation>
    <text evidence="4">Translocates from cytoplasm to nucleus when phosphorylated.</text>
</comment>
<comment type="alternative products">
    <event type="alternative splicing"/>
    <isoform>
        <id>Q969T9-1</id>
        <name>1</name>
        <sequence type="displayed"/>
    </isoform>
    <isoform>
        <id>Q969T9-2</id>
        <name>2</name>
        <sequence type="described" ref="VSP_059233"/>
    </isoform>
</comment>
<comment type="tissue specificity">
    <text>Ubiquitous.</text>
</comment>
<comment type="domain">
    <text evidence="1 3">The PPxY motif 1 mediates interaction with NEDD4 (By similarity). The PPxY motif 2 is required for the coactivation function (PubMed:16772533).</text>
</comment>
<comment type="PTM">
    <text evidence="4">Phosphorylated in repsonse to EGF as well as estrogen and progesterone hormones (PubMed:21642474). Tyr-192 and Tyr-231 are phosphorylated by YES and SRC inducing nuclear translocation (PubMed:21642474).</text>
</comment>
<comment type="disease" evidence="5">
    <disease id="DI-05057">
        <name>Deafness, autosomal recessive, 107</name>
        <acronym>DFNB107</acronym>
        <description>A form of non-syndromic sensorineural hearing loss. Sensorineural deafness results from damage to the neural receptors of the inner ear, the nerve pathways to the brain, or the area of the brain that receives sound information.</description>
        <dbReference type="MIM" id="617639"/>
    </disease>
    <text>The disease is caused by variants affecting the gene represented in this entry.</text>
</comment>
<comment type="sequence caution" evidence="8">
    <conflict type="erroneous initiation">
        <sequence resource="EMBL-CDS" id="AAD10951"/>
    </conflict>
    <text>Extended N-terminus.</text>
</comment>
<gene>
    <name evidence="9" type="primary">WBP2</name>
</gene>
<protein>
    <recommendedName>
        <fullName>WW domain-binding protein 2</fullName>
        <shortName>WBP-2</shortName>
    </recommendedName>
</protein>
<accession>Q969T9</accession>
<accession>B4DFG2</accession>
<accession>O95638</accession>
<reference key="1">
    <citation type="journal article" date="1997" name="J. Biol. Chem.">
        <title>Characterization of the WW domain of human Yes-associated protein and its polyproline containing ligands.</title>
        <authorList>
            <person name="Chen H.I."/>
            <person name="Einbond A."/>
            <person name="Kwak S.-J."/>
            <person name="Linn H."/>
            <person name="Koepf E."/>
            <person name="Peterson S."/>
            <person name="Kelly J.W."/>
            <person name="Sudol M."/>
        </authorList>
    </citation>
    <scope>NUCLEOTIDE SEQUENCE [MRNA] (ISOFORM 1)</scope>
    <scope>INTERACTION WITH YAP1</scope>
</reference>
<reference key="2">
    <citation type="journal article" date="2004" name="Nat. Genet.">
        <title>Complete sequencing and characterization of 21,243 full-length human cDNAs.</title>
        <authorList>
            <person name="Ota T."/>
            <person name="Suzuki Y."/>
            <person name="Nishikawa T."/>
            <person name="Otsuki T."/>
            <person name="Sugiyama T."/>
            <person name="Irie R."/>
            <person name="Wakamatsu A."/>
            <person name="Hayashi K."/>
            <person name="Sato H."/>
            <person name="Nagai K."/>
            <person name="Kimura K."/>
            <person name="Makita H."/>
            <person name="Sekine M."/>
            <person name="Obayashi M."/>
            <person name="Nishi T."/>
            <person name="Shibahara T."/>
            <person name="Tanaka T."/>
            <person name="Ishii S."/>
            <person name="Yamamoto J."/>
            <person name="Saito K."/>
            <person name="Kawai Y."/>
            <person name="Isono Y."/>
            <person name="Nakamura Y."/>
            <person name="Nagahari K."/>
            <person name="Murakami K."/>
            <person name="Yasuda T."/>
            <person name="Iwayanagi T."/>
            <person name="Wagatsuma M."/>
            <person name="Shiratori A."/>
            <person name="Sudo H."/>
            <person name="Hosoiri T."/>
            <person name="Kaku Y."/>
            <person name="Kodaira H."/>
            <person name="Kondo H."/>
            <person name="Sugawara M."/>
            <person name="Takahashi M."/>
            <person name="Kanda K."/>
            <person name="Yokoi T."/>
            <person name="Furuya T."/>
            <person name="Kikkawa E."/>
            <person name="Omura Y."/>
            <person name="Abe K."/>
            <person name="Kamihara K."/>
            <person name="Katsuta N."/>
            <person name="Sato K."/>
            <person name="Tanikawa M."/>
            <person name="Yamazaki M."/>
            <person name="Ninomiya K."/>
            <person name="Ishibashi T."/>
            <person name="Yamashita H."/>
            <person name="Murakawa K."/>
            <person name="Fujimori K."/>
            <person name="Tanai H."/>
            <person name="Kimata M."/>
            <person name="Watanabe M."/>
            <person name="Hiraoka S."/>
            <person name="Chiba Y."/>
            <person name="Ishida S."/>
            <person name="Ono Y."/>
            <person name="Takiguchi S."/>
            <person name="Watanabe S."/>
            <person name="Yosida M."/>
            <person name="Hotuta T."/>
            <person name="Kusano J."/>
            <person name="Kanehori K."/>
            <person name="Takahashi-Fujii A."/>
            <person name="Hara H."/>
            <person name="Tanase T.-O."/>
            <person name="Nomura Y."/>
            <person name="Togiya S."/>
            <person name="Komai F."/>
            <person name="Hara R."/>
            <person name="Takeuchi K."/>
            <person name="Arita M."/>
            <person name="Imose N."/>
            <person name="Musashino K."/>
            <person name="Yuuki H."/>
            <person name="Oshima A."/>
            <person name="Sasaki N."/>
            <person name="Aotsuka S."/>
            <person name="Yoshikawa Y."/>
            <person name="Matsunawa H."/>
            <person name="Ichihara T."/>
            <person name="Shiohata N."/>
            <person name="Sano S."/>
            <person name="Moriya S."/>
            <person name="Momiyama H."/>
            <person name="Satoh N."/>
            <person name="Takami S."/>
            <person name="Terashima Y."/>
            <person name="Suzuki O."/>
            <person name="Nakagawa S."/>
            <person name="Senoh A."/>
            <person name="Mizoguchi H."/>
            <person name="Goto Y."/>
            <person name="Shimizu F."/>
            <person name="Wakebe H."/>
            <person name="Hishigaki H."/>
            <person name="Watanabe T."/>
            <person name="Sugiyama A."/>
            <person name="Takemoto M."/>
            <person name="Kawakami B."/>
            <person name="Yamazaki M."/>
            <person name="Watanabe K."/>
            <person name="Kumagai A."/>
            <person name="Itakura S."/>
            <person name="Fukuzumi Y."/>
            <person name="Fujimori Y."/>
            <person name="Komiyama M."/>
            <person name="Tashiro H."/>
            <person name="Tanigami A."/>
            <person name="Fujiwara T."/>
            <person name="Ono T."/>
            <person name="Yamada K."/>
            <person name="Fujii Y."/>
            <person name="Ozaki K."/>
            <person name="Hirao M."/>
            <person name="Ohmori Y."/>
            <person name="Kawabata A."/>
            <person name="Hikiji T."/>
            <person name="Kobatake N."/>
            <person name="Inagaki H."/>
            <person name="Ikema Y."/>
            <person name="Okamoto S."/>
            <person name="Okitani R."/>
            <person name="Kawakami T."/>
            <person name="Noguchi S."/>
            <person name="Itoh T."/>
            <person name="Shigeta K."/>
            <person name="Senba T."/>
            <person name="Matsumura K."/>
            <person name="Nakajima Y."/>
            <person name="Mizuno T."/>
            <person name="Morinaga M."/>
            <person name="Sasaki M."/>
            <person name="Togashi T."/>
            <person name="Oyama M."/>
            <person name="Hata H."/>
            <person name="Watanabe M."/>
            <person name="Komatsu T."/>
            <person name="Mizushima-Sugano J."/>
            <person name="Satoh T."/>
            <person name="Shirai Y."/>
            <person name="Takahashi Y."/>
            <person name="Nakagawa K."/>
            <person name="Okumura K."/>
            <person name="Nagase T."/>
            <person name="Nomura N."/>
            <person name="Kikuchi H."/>
            <person name="Masuho Y."/>
            <person name="Yamashita R."/>
            <person name="Nakai K."/>
            <person name="Yada T."/>
            <person name="Nakamura Y."/>
            <person name="Ohara O."/>
            <person name="Isogai T."/>
            <person name="Sugano S."/>
        </authorList>
    </citation>
    <scope>NUCLEOTIDE SEQUENCE [LARGE SCALE MRNA] (ISOFORM 2)</scope>
</reference>
<reference key="3">
    <citation type="journal article" date="2006" name="Nature">
        <title>DNA sequence of human chromosome 17 and analysis of rearrangement in the human lineage.</title>
        <authorList>
            <person name="Zody M.C."/>
            <person name="Garber M."/>
            <person name="Adams D.J."/>
            <person name="Sharpe T."/>
            <person name="Harrow J."/>
            <person name="Lupski J.R."/>
            <person name="Nicholson C."/>
            <person name="Searle S.M."/>
            <person name="Wilming L."/>
            <person name="Young S.K."/>
            <person name="Abouelleil A."/>
            <person name="Allen N.R."/>
            <person name="Bi W."/>
            <person name="Bloom T."/>
            <person name="Borowsky M.L."/>
            <person name="Bugalter B.E."/>
            <person name="Butler J."/>
            <person name="Chang J.L."/>
            <person name="Chen C.-K."/>
            <person name="Cook A."/>
            <person name="Corum B."/>
            <person name="Cuomo C.A."/>
            <person name="de Jong P.J."/>
            <person name="DeCaprio D."/>
            <person name="Dewar K."/>
            <person name="FitzGerald M."/>
            <person name="Gilbert J."/>
            <person name="Gibson R."/>
            <person name="Gnerre S."/>
            <person name="Goldstein S."/>
            <person name="Grafham D.V."/>
            <person name="Grocock R."/>
            <person name="Hafez N."/>
            <person name="Hagopian D.S."/>
            <person name="Hart E."/>
            <person name="Norman C.H."/>
            <person name="Humphray S."/>
            <person name="Jaffe D.B."/>
            <person name="Jones M."/>
            <person name="Kamal M."/>
            <person name="Khodiyar V.K."/>
            <person name="LaButti K."/>
            <person name="Laird G."/>
            <person name="Lehoczky J."/>
            <person name="Liu X."/>
            <person name="Lokyitsang T."/>
            <person name="Loveland J."/>
            <person name="Lui A."/>
            <person name="Macdonald P."/>
            <person name="Major J.E."/>
            <person name="Matthews L."/>
            <person name="Mauceli E."/>
            <person name="McCarroll S.A."/>
            <person name="Mihalev A.H."/>
            <person name="Mudge J."/>
            <person name="Nguyen C."/>
            <person name="Nicol R."/>
            <person name="O'Leary S.B."/>
            <person name="Osoegawa K."/>
            <person name="Schwartz D.C."/>
            <person name="Shaw-Smith C."/>
            <person name="Stankiewicz P."/>
            <person name="Steward C."/>
            <person name="Swarbreck D."/>
            <person name="Venkataraman V."/>
            <person name="Whittaker C.A."/>
            <person name="Yang X."/>
            <person name="Zimmer A.R."/>
            <person name="Bradley A."/>
            <person name="Hubbard T."/>
            <person name="Birren B.W."/>
            <person name="Rogers J."/>
            <person name="Lander E.S."/>
            <person name="Nusbaum C."/>
        </authorList>
    </citation>
    <scope>NUCLEOTIDE SEQUENCE [LARGE SCALE GENOMIC DNA]</scope>
</reference>
<reference key="4">
    <citation type="journal article" date="2004" name="Genome Res.">
        <title>The status, quality, and expansion of the NIH full-length cDNA project: the Mammalian Gene Collection (MGC).</title>
        <authorList>
            <consortium name="The MGC Project Team"/>
        </authorList>
    </citation>
    <scope>NUCLEOTIDE SEQUENCE [LARGE SCALE MRNA] (ISOFORM 1)</scope>
    <source>
        <tissue>Brain</tissue>
        <tissue>Placenta</tissue>
    </source>
</reference>
<reference key="5">
    <citation type="journal article" date="1997" name="J. Biol. Chem.">
        <title>Identification of novel human WW domain-containing proteins by cloning of ligand targets.</title>
        <authorList>
            <person name="Pirozzi G."/>
            <person name="McConnell S.J."/>
            <person name="Uveges A.J."/>
            <person name="Carter J.M."/>
            <person name="Sparks A.B."/>
            <person name="Kay B.K."/>
            <person name="Fowlkes D.M."/>
        </authorList>
    </citation>
    <scope>INTERACTION WITH WWP1 AND WWP2</scope>
</reference>
<reference key="6">
    <citation type="journal article" date="2006" name="Mol. Endocrinol.">
        <title>WW domain binding protein-2, an E6-associated protein interacting protein, acts as a coactivator of estrogen and progesterone receptors.</title>
        <authorList>
            <person name="Dhananjayan S.C."/>
            <person name="Ramamoorthy S."/>
            <person name="Khan O.Y."/>
            <person name="Ismail A."/>
            <person name="Sun J."/>
            <person name="Slingerland J."/>
            <person name="O'Malley B.W."/>
            <person name="Nawaz Z."/>
        </authorList>
    </citation>
    <scope>FUNCTION</scope>
    <scope>INTERACTION WITH ESR1 AND UBE3A</scope>
    <scope>MUTAGENESIS OF 248-PRO--TYR-252</scope>
    <scope>DOMAIN</scope>
</reference>
<reference key="7">
    <citation type="journal article" date="2011" name="BMC Syst. Biol.">
        <title>Initial characterization of the human central proteome.</title>
        <authorList>
            <person name="Burkard T.R."/>
            <person name="Planyavsky M."/>
            <person name="Kaupe I."/>
            <person name="Breitwieser F.P."/>
            <person name="Buerckstuemmer T."/>
            <person name="Bennett K.L."/>
            <person name="Superti-Furga G."/>
            <person name="Colinge J."/>
        </authorList>
    </citation>
    <scope>IDENTIFICATION BY MASS SPECTROMETRY [LARGE SCALE ANALYSIS]</scope>
</reference>
<reference key="8">
    <citation type="journal article" date="2011" name="FASEB J.">
        <title>Tyrosine phosphorylation of transcriptional coactivator WW-domain binding protein 2 regulates estrogen receptor alpha function in breast cancer via the Wnt pathway.</title>
        <authorList>
            <person name="Lim S.K."/>
            <person name="Orhant-Prioux M."/>
            <person name="Toy W."/>
            <person name="Tan K.Y."/>
            <person name="Lim Y.P."/>
        </authorList>
    </citation>
    <scope>FUNCTION</scope>
    <scope>SUBCELLULAR LOCATION</scope>
    <scope>PHOSPHORYLATION AT TYR-192 AND TYR-231</scope>
    <scope>MUTAGENESIS OF TYR-25; TYR-51; TYR-55; TYR-75; TYR-143; TYR-145; TYR-153; TYR-164; TYR-170; TYR-172; TYR-180; TYR-192; TYR-200; TYR-231; TYR-232; TYR-252 AND TYR-253</scope>
    <scope>INTERACTION WITH ESR1</scope>
</reference>
<reference key="9">
    <citation type="journal article" date="2016" name="EMBO Mol. Med.">
        <title>Wbp2 is required for normal glutamatergic synapses in the cochlea and is crucial for hearing.</title>
        <authorList>
            <person name="Buniello A."/>
            <person name="Ingham N.J."/>
            <person name="Lewis M.A."/>
            <person name="Huma A.C."/>
            <person name="Martinez-Vega R."/>
            <person name="Varela-Nieto I."/>
            <person name="Vizcay-Barrena G."/>
            <person name="Fleck R.A."/>
            <person name="Houston O."/>
            <person name="Bardhan T."/>
            <person name="Johnson S.L."/>
            <person name="White J.K."/>
            <person name="Yuan H."/>
            <person name="Marcotti W."/>
            <person name="Steel K.P."/>
        </authorList>
    </citation>
    <scope>INVOLVEMENT IN DFNB107</scope>
    <scope>VARIANTS DFNB107 THR-160; LEU-163 AND VAL-224</scope>
</reference>